<sequence>MGMRMMFTVFLLVVLATTVVSFTSDRAFDGRNAAASDKASDLISLAVRGCCSHPACSVNNPYFCGGKR</sequence>
<feature type="signal peptide" evidence="4">
    <location>
        <begin position="1"/>
        <end position="21"/>
    </location>
</feature>
<feature type="propeptide" id="PRO_0000247845" evidence="3">
    <location>
        <begin position="22"/>
        <end position="48"/>
    </location>
</feature>
<feature type="peptide" id="PRO_0000247846" description="Alpha-conotoxin-like Lp1.2" evidence="3">
    <location>
        <begin position="49"/>
        <end position="64"/>
    </location>
</feature>
<feature type="propeptide" id="PRO_0000444874" evidence="5">
    <location>
        <begin position="65"/>
        <end position="68"/>
    </location>
</feature>
<feature type="region of interest" description="Ser-Xaa-Pro motif, crucial for potent interaction with nAChR" evidence="2">
    <location>
        <begin position="52"/>
        <end position="54"/>
    </location>
</feature>
<feature type="modified residue" description="Cysteine amide" evidence="3">
    <location>
        <position position="64"/>
    </location>
</feature>
<feature type="disulfide bond" evidence="2">
    <location>
        <begin position="50"/>
        <end position="56"/>
    </location>
</feature>
<feature type="disulfide bond" evidence="2">
    <location>
        <begin position="51"/>
        <end position="64"/>
    </location>
</feature>
<organism>
    <name type="scientific">Conus leopardus</name>
    <name type="common">Leopard cone</name>
    <dbReference type="NCBI Taxonomy" id="101306"/>
    <lineage>
        <taxon>Eukaryota</taxon>
        <taxon>Metazoa</taxon>
        <taxon>Spiralia</taxon>
        <taxon>Lophotrochozoa</taxon>
        <taxon>Mollusca</taxon>
        <taxon>Gastropoda</taxon>
        <taxon>Caenogastropoda</taxon>
        <taxon>Neogastropoda</taxon>
        <taxon>Conoidea</taxon>
        <taxon>Conidae</taxon>
        <taxon>Conus</taxon>
        <taxon>Lithoconus</taxon>
    </lineage>
</organism>
<accession>Q6PTD4</accession>
<name>CA12_CONLE</name>
<proteinExistence type="inferred from homology"/>
<dbReference type="EMBL" id="AY580322">
    <property type="protein sequence ID" value="AAS93425.1"/>
    <property type="molecule type" value="mRNA"/>
</dbReference>
<dbReference type="ConoServer" id="120">
    <property type="toxin name" value="Lp1.2 precursor"/>
</dbReference>
<dbReference type="GO" id="GO:0005576">
    <property type="term" value="C:extracellular region"/>
    <property type="evidence" value="ECO:0007669"/>
    <property type="project" value="UniProtKB-SubCell"/>
</dbReference>
<dbReference type="GO" id="GO:0035792">
    <property type="term" value="C:host cell postsynaptic membrane"/>
    <property type="evidence" value="ECO:0007669"/>
    <property type="project" value="UniProtKB-KW"/>
</dbReference>
<dbReference type="GO" id="GO:0030550">
    <property type="term" value="F:acetylcholine receptor inhibitor activity"/>
    <property type="evidence" value="ECO:0007669"/>
    <property type="project" value="UniProtKB-KW"/>
</dbReference>
<dbReference type="GO" id="GO:0099106">
    <property type="term" value="F:ion channel regulator activity"/>
    <property type="evidence" value="ECO:0007669"/>
    <property type="project" value="UniProtKB-KW"/>
</dbReference>
<dbReference type="GO" id="GO:0090729">
    <property type="term" value="F:toxin activity"/>
    <property type="evidence" value="ECO:0007669"/>
    <property type="project" value="UniProtKB-KW"/>
</dbReference>
<dbReference type="InterPro" id="IPR009958">
    <property type="entry name" value="Conotoxin_a-typ"/>
</dbReference>
<dbReference type="Pfam" id="PF07365">
    <property type="entry name" value="Toxin_8"/>
    <property type="match status" value="1"/>
</dbReference>
<reference key="1">
    <citation type="submission" date="2004-03" db="EMBL/GenBank/DDBJ databases">
        <authorList>
            <person name="Han Y.H."/>
            <person name="Wang Q."/>
            <person name="Jiang H."/>
            <person name="Chen J.S."/>
            <person name="Chi C.W."/>
        </authorList>
    </citation>
    <scope>NUCLEOTIDE SEQUENCE [MRNA]</scope>
    <source>
        <tissue>Venom duct</tissue>
    </source>
</reference>
<comment type="function">
    <text evidence="1">Alpha-conotoxins act on postsynaptic membranes, they bind to the nicotinic acetylcholine receptors (nAChR) and thus inhibit them.</text>
</comment>
<comment type="subcellular location">
    <subcellularLocation>
        <location evidence="6">Secreted</location>
    </subcellularLocation>
</comment>
<comment type="tissue specificity">
    <text evidence="6">Expressed by the venom duct.</text>
</comment>
<comment type="domain">
    <text evidence="5">The cysteine framework is I (CC-C-C). Alpha4/7 pattern.</text>
</comment>
<comment type="similarity">
    <text evidence="5">Belongs to the conotoxin A superfamily.</text>
</comment>
<keyword id="KW-0008">Acetylcholine receptor inhibiting toxin</keyword>
<keyword id="KW-0027">Amidation</keyword>
<keyword id="KW-1015">Disulfide bond</keyword>
<keyword id="KW-0872">Ion channel impairing toxin</keyword>
<keyword id="KW-0528">Neurotoxin</keyword>
<keyword id="KW-0629">Postsynaptic neurotoxin</keyword>
<keyword id="KW-0964">Secreted</keyword>
<keyword id="KW-0732">Signal</keyword>
<keyword id="KW-0800">Toxin</keyword>
<evidence type="ECO:0000250" key="1">
    <source>
        <dbReference type="UniProtKB" id="A0A068B0Z6"/>
    </source>
</evidence>
<evidence type="ECO:0000250" key="2">
    <source>
        <dbReference type="UniProtKB" id="P56636"/>
    </source>
</evidence>
<evidence type="ECO:0000250" key="3">
    <source>
        <dbReference type="UniProtKB" id="P85013"/>
    </source>
</evidence>
<evidence type="ECO:0000255" key="4"/>
<evidence type="ECO:0000305" key="5"/>
<evidence type="ECO:0000305" key="6">
    <source ref="1"/>
</evidence>
<evidence type="ECO:0000312" key="7">
    <source>
        <dbReference type="EMBL" id="AAS93425.1"/>
    </source>
</evidence>
<protein>
    <recommendedName>
        <fullName evidence="7">Alpha-conotoxin-like Lp1.2</fullName>
    </recommendedName>
</protein>